<evidence type="ECO:0000255" key="1">
    <source>
        <dbReference type="HAMAP-Rule" id="MF_00437"/>
    </source>
</evidence>
<gene>
    <name evidence="1" type="primary">ycf4</name>
</gene>
<name>YCF4_PIPCE</name>
<feature type="chain" id="PRO_0000275667" description="Photosystem I assembly protein Ycf4">
    <location>
        <begin position="1"/>
        <end position="184"/>
    </location>
</feature>
<feature type="transmembrane region" description="Helical" evidence="1">
    <location>
        <begin position="22"/>
        <end position="42"/>
    </location>
</feature>
<feature type="transmembrane region" description="Helical" evidence="1">
    <location>
        <begin position="64"/>
        <end position="84"/>
    </location>
</feature>
<dbReference type="EMBL" id="DQ887677">
    <property type="protein sequence ID" value="ABI14483.1"/>
    <property type="molecule type" value="Genomic_DNA"/>
</dbReference>
<dbReference type="RefSeq" id="YP_784484.1">
    <property type="nucleotide sequence ID" value="NC_008457.1"/>
</dbReference>
<dbReference type="GeneID" id="4363667"/>
<dbReference type="GO" id="GO:0009535">
    <property type="term" value="C:chloroplast thylakoid membrane"/>
    <property type="evidence" value="ECO:0007669"/>
    <property type="project" value="UniProtKB-SubCell"/>
</dbReference>
<dbReference type="GO" id="GO:0009522">
    <property type="term" value="C:photosystem I"/>
    <property type="evidence" value="ECO:0007669"/>
    <property type="project" value="InterPro"/>
</dbReference>
<dbReference type="GO" id="GO:0015979">
    <property type="term" value="P:photosynthesis"/>
    <property type="evidence" value="ECO:0007669"/>
    <property type="project" value="UniProtKB-UniRule"/>
</dbReference>
<dbReference type="HAMAP" id="MF_00437">
    <property type="entry name" value="Ycf4"/>
    <property type="match status" value="1"/>
</dbReference>
<dbReference type="InterPro" id="IPR003359">
    <property type="entry name" value="PSI_Ycf4_assembly"/>
</dbReference>
<dbReference type="PANTHER" id="PTHR33288">
    <property type="match status" value="1"/>
</dbReference>
<dbReference type="PANTHER" id="PTHR33288:SF4">
    <property type="entry name" value="PHOTOSYSTEM I ASSEMBLY PROTEIN YCF4"/>
    <property type="match status" value="1"/>
</dbReference>
<dbReference type="Pfam" id="PF02392">
    <property type="entry name" value="Ycf4"/>
    <property type="match status" value="1"/>
</dbReference>
<reference key="1">
    <citation type="journal article" date="2006" name="BMC Evol. Biol.">
        <title>Complete plastid genome sequences of Drimys, Liriodendron, and Piper: implications for the phylogenetic relationships of magnoliids.</title>
        <authorList>
            <person name="Cai Z."/>
            <person name="Penaflor C."/>
            <person name="Kuehl J.V."/>
            <person name="Leebens-Mack J."/>
            <person name="Carlson J.E."/>
            <person name="dePamphilis C.W."/>
            <person name="Boore J.L."/>
            <person name="Jansen R.K."/>
        </authorList>
    </citation>
    <scope>NUCLEOTIDE SEQUENCE [LARGE SCALE GENOMIC DNA]</scope>
</reference>
<proteinExistence type="inferred from homology"/>
<comment type="function">
    <text evidence="1">Seems to be required for the assembly of the photosystem I complex.</text>
</comment>
<comment type="subcellular location">
    <subcellularLocation>
        <location evidence="1">Plastid</location>
        <location evidence="1">Chloroplast thylakoid membrane</location>
        <topology evidence="1">Multi-pass membrane protein</topology>
    </subcellularLocation>
</comment>
<comment type="similarity">
    <text evidence="1">Belongs to the Ycf4 family.</text>
</comment>
<organism>
    <name type="scientific">Piper cenocladum</name>
    <name type="common">Ant piper</name>
    <dbReference type="NCBI Taxonomy" id="398741"/>
    <lineage>
        <taxon>Eukaryota</taxon>
        <taxon>Viridiplantae</taxon>
        <taxon>Streptophyta</taxon>
        <taxon>Embryophyta</taxon>
        <taxon>Tracheophyta</taxon>
        <taxon>Spermatophyta</taxon>
        <taxon>Magnoliopsida</taxon>
        <taxon>Magnoliidae</taxon>
        <taxon>Piperales</taxon>
        <taxon>Piperaceae</taxon>
        <taxon>Piper</taxon>
    </lineage>
</organism>
<sequence>MNRRSERIWIEFIMGSRKTSNFCWACILLLGSLGFLLVGISSYLGRNLISLFPSQQINFFPQGIVMSFYGIAGLFISSYLWSTILWNIGSGYDRFDRKEGIVCIFRWGFPGINRRIFLRVFMGDIQSIRIEVKGGVYPRRVLYMDIRGQGSVPLTRTDENFTPREIEQKAAESAYFLRVPIEVF</sequence>
<geneLocation type="chloroplast"/>
<keyword id="KW-0150">Chloroplast</keyword>
<keyword id="KW-0472">Membrane</keyword>
<keyword id="KW-0602">Photosynthesis</keyword>
<keyword id="KW-0934">Plastid</keyword>
<keyword id="KW-0793">Thylakoid</keyword>
<keyword id="KW-0812">Transmembrane</keyword>
<keyword id="KW-1133">Transmembrane helix</keyword>
<accession>Q06GP9</accession>
<protein>
    <recommendedName>
        <fullName evidence="1">Photosystem I assembly protein Ycf4</fullName>
    </recommendedName>
</protein>